<name>BPT_ACIBY</name>
<accession>B0V8X8</accession>
<reference key="1">
    <citation type="journal article" date="2008" name="PLoS ONE">
        <title>Comparative analysis of Acinetobacters: three genomes for three lifestyles.</title>
        <authorList>
            <person name="Vallenet D."/>
            <person name="Nordmann P."/>
            <person name="Barbe V."/>
            <person name="Poirel L."/>
            <person name="Mangenot S."/>
            <person name="Bataille E."/>
            <person name="Dossat C."/>
            <person name="Gas S."/>
            <person name="Kreimeyer A."/>
            <person name="Lenoble P."/>
            <person name="Oztas S."/>
            <person name="Poulain J."/>
            <person name="Segurens B."/>
            <person name="Robert C."/>
            <person name="Abergel C."/>
            <person name="Claverie J.-M."/>
            <person name="Raoult D."/>
            <person name="Medigue C."/>
            <person name="Weissenbach J."/>
            <person name="Cruveiller S."/>
        </authorList>
    </citation>
    <scope>NUCLEOTIDE SEQUENCE [LARGE SCALE GENOMIC DNA]</scope>
    <source>
        <strain>AYE</strain>
    </source>
</reference>
<sequence>MKSYHPKSLLNDLQYYITPPHDCSYLENKSARMVFLDPIHRIDVVTLSELSRLGFRRSGDFVYRPECHLCRQCLSCRVPVADFQMNSMQKKAWKRNQDLTMTVLPTRQASQIHYDLYERYINERHADGDMFPPSLDQFEKFLVHSCTDSFFLELWKDNRLISVSTCDLMDDGLSAVYTFFDPDEHRRSLGVYSILNQIEYVKTLGLEYVYLGYWVPHSAKMNYKSQYTPLELLLDGQWRRLNRSLSPEEINQLGNSLMTTLPSEWNNLIIK</sequence>
<dbReference type="EC" id="2.3.2.29" evidence="1"/>
<dbReference type="EMBL" id="CU459141">
    <property type="protein sequence ID" value="CAM87764.1"/>
    <property type="molecule type" value="Genomic_DNA"/>
</dbReference>
<dbReference type="RefSeq" id="WP_000844343.1">
    <property type="nucleotide sequence ID" value="NZ_JBDGFB010000015.1"/>
</dbReference>
<dbReference type="SMR" id="B0V8X8"/>
<dbReference type="EnsemblBacteria" id="CAM87764">
    <property type="protein sequence ID" value="CAM87764"/>
    <property type="gene ID" value="ABAYE2942"/>
</dbReference>
<dbReference type="KEGG" id="aby:ABAYE2942"/>
<dbReference type="HOGENOM" id="CLU_077607_0_0_6"/>
<dbReference type="GO" id="GO:0005737">
    <property type="term" value="C:cytoplasm"/>
    <property type="evidence" value="ECO:0007669"/>
    <property type="project" value="UniProtKB-SubCell"/>
</dbReference>
<dbReference type="GO" id="GO:0004057">
    <property type="term" value="F:arginyl-tRNA--protein transferase activity"/>
    <property type="evidence" value="ECO:0007669"/>
    <property type="project" value="InterPro"/>
</dbReference>
<dbReference type="GO" id="GO:0008914">
    <property type="term" value="F:leucyl-tRNA--protein transferase activity"/>
    <property type="evidence" value="ECO:0007669"/>
    <property type="project" value="UniProtKB-UniRule"/>
</dbReference>
<dbReference type="GO" id="GO:0071596">
    <property type="term" value="P:ubiquitin-dependent protein catabolic process via the N-end rule pathway"/>
    <property type="evidence" value="ECO:0007669"/>
    <property type="project" value="InterPro"/>
</dbReference>
<dbReference type="HAMAP" id="MF_00689">
    <property type="entry name" value="Bpt"/>
    <property type="match status" value="1"/>
</dbReference>
<dbReference type="InterPro" id="IPR016181">
    <property type="entry name" value="Acyl_CoA_acyltransferase"/>
</dbReference>
<dbReference type="InterPro" id="IPR017138">
    <property type="entry name" value="Asp_Glu_LeuTrfase"/>
</dbReference>
<dbReference type="InterPro" id="IPR030700">
    <property type="entry name" value="N-end_Aminoacyl_Trfase"/>
</dbReference>
<dbReference type="InterPro" id="IPR007472">
    <property type="entry name" value="N-end_Aminoacyl_Trfase_C"/>
</dbReference>
<dbReference type="InterPro" id="IPR007471">
    <property type="entry name" value="N-end_Aminoacyl_Trfase_N"/>
</dbReference>
<dbReference type="NCBIfam" id="NF002341">
    <property type="entry name" value="PRK01305.1-1"/>
    <property type="match status" value="1"/>
</dbReference>
<dbReference type="NCBIfam" id="NF002342">
    <property type="entry name" value="PRK01305.1-3"/>
    <property type="match status" value="1"/>
</dbReference>
<dbReference type="NCBIfam" id="NF002346">
    <property type="entry name" value="PRK01305.2-3"/>
    <property type="match status" value="1"/>
</dbReference>
<dbReference type="PANTHER" id="PTHR21367">
    <property type="entry name" value="ARGININE-TRNA-PROTEIN TRANSFERASE 1"/>
    <property type="match status" value="1"/>
</dbReference>
<dbReference type="PANTHER" id="PTHR21367:SF1">
    <property type="entry name" value="ARGINYL-TRNA--PROTEIN TRANSFERASE 1"/>
    <property type="match status" value="1"/>
</dbReference>
<dbReference type="Pfam" id="PF04377">
    <property type="entry name" value="ATE_C"/>
    <property type="match status" value="1"/>
</dbReference>
<dbReference type="Pfam" id="PF04376">
    <property type="entry name" value="ATE_N"/>
    <property type="match status" value="1"/>
</dbReference>
<dbReference type="PIRSF" id="PIRSF037208">
    <property type="entry name" value="ATE_pro_prd"/>
    <property type="match status" value="1"/>
</dbReference>
<dbReference type="SUPFAM" id="SSF55729">
    <property type="entry name" value="Acyl-CoA N-acyltransferases (Nat)"/>
    <property type="match status" value="1"/>
</dbReference>
<gene>
    <name evidence="1" type="primary">bpt</name>
    <name type="ordered locus">ABAYE2942</name>
</gene>
<keyword id="KW-0012">Acyltransferase</keyword>
<keyword id="KW-0963">Cytoplasm</keyword>
<keyword id="KW-0808">Transferase</keyword>
<evidence type="ECO:0000255" key="1">
    <source>
        <dbReference type="HAMAP-Rule" id="MF_00689"/>
    </source>
</evidence>
<protein>
    <recommendedName>
        <fullName evidence="1">Aspartate/glutamate leucyltransferase</fullName>
        <ecNumber evidence="1">2.3.2.29</ecNumber>
    </recommendedName>
</protein>
<organism>
    <name type="scientific">Acinetobacter baumannii (strain AYE)</name>
    <dbReference type="NCBI Taxonomy" id="509173"/>
    <lineage>
        <taxon>Bacteria</taxon>
        <taxon>Pseudomonadati</taxon>
        <taxon>Pseudomonadota</taxon>
        <taxon>Gammaproteobacteria</taxon>
        <taxon>Moraxellales</taxon>
        <taxon>Moraxellaceae</taxon>
        <taxon>Acinetobacter</taxon>
        <taxon>Acinetobacter calcoaceticus/baumannii complex</taxon>
    </lineage>
</organism>
<feature type="chain" id="PRO_1000131967" description="Aspartate/glutamate leucyltransferase">
    <location>
        <begin position="1"/>
        <end position="271"/>
    </location>
</feature>
<proteinExistence type="inferred from homology"/>
<comment type="function">
    <text evidence="1">Functions in the N-end rule pathway of protein degradation where it conjugates Leu from its aminoacyl-tRNA to the N-termini of proteins containing an N-terminal aspartate or glutamate.</text>
</comment>
<comment type="catalytic activity">
    <reaction evidence="1">
        <text>N-terminal L-glutamyl-[protein] + L-leucyl-tRNA(Leu) = N-terminal L-leucyl-L-glutamyl-[protein] + tRNA(Leu) + H(+)</text>
        <dbReference type="Rhea" id="RHEA:50412"/>
        <dbReference type="Rhea" id="RHEA-COMP:9613"/>
        <dbReference type="Rhea" id="RHEA-COMP:9622"/>
        <dbReference type="Rhea" id="RHEA-COMP:12664"/>
        <dbReference type="Rhea" id="RHEA-COMP:12668"/>
        <dbReference type="ChEBI" id="CHEBI:15378"/>
        <dbReference type="ChEBI" id="CHEBI:64721"/>
        <dbReference type="ChEBI" id="CHEBI:78442"/>
        <dbReference type="ChEBI" id="CHEBI:78494"/>
        <dbReference type="ChEBI" id="CHEBI:133041"/>
        <dbReference type="EC" id="2.3.2.29"/>
    </reaction>
</comment>
<comment type="catalytic activity">
    <reaction evidence="1">
        <text>N-terminal L-aspartyl-[protein] + L-leucyl-tRNA(Leu) = N-terminal L-leucyl-L-aspartyl-[protein] + tRNA(Leu) + H(+)</text>
        <dbReference type="Rhea" id="RHEA:50420"/>
        <dbReference type="Rhea" id="RHEA-COMP:9613"/>
        <dbReference type="Rhea" id="RHEA-COMP:9622"/>
        <dbReference type="Rhea" id="RHEA-COMP:12669"/>
        <dbReference type="Rhea" id="RHEA-COMP:12674"/>
        <dbReference type="ChEBI" id="CHEBI:15378"/>
        <dbReference type="ChEBI" id="CHEBI:64720"/>
        <dbReference type="ChEBI" id="CHEBI:78442"/>
        <dbReference type="ChEBI" id="CHEBI:78494"/>
        <dbReference type="ChEBI" id="CHEBI:133042"/>
        <dbReference type="EC" id="2.3.2.29"/>
    </reaction>
</comment>
<comment type="subcellular location">
    <subcellularLocation>
        <location evidence="1">Cytoplasm</location>
    </subcellularLocation>
</comment>
<comment type="similarity">
    <text evidence="1">Belongs to the R-transferase family. Bpt subfamily.</text>
</comment>